<feature type="chain" id="PRO_1000205564" description="Large ribosomal subunit protein bL12">
    <location>
        <begin position="1"/>
        <end position="129"/>
    </location>
</feature>
<proteinExistence type="inferred from homology"/>
<organism>
    <name type="scientific">Micrococcus luteus (strain ATCC 4698 / DSM 20030 / JCM 1464 / CCM 169 / CCUG 5858 / IAM 1056 / NBRC 3333 / NCIMB 9278 / NCTC 2665 / VKM Ac-2230)</name>
    <name type="common">Micrococcus lysodeikticus</name>
    <dbReference type="NCBI Taxonomy" id="465515"/>
    <lineage>
        <taxon>Bacteria</taxon>
        <taxon>Bacillati</taxon>
        <taxon>Actinomycetota</taxon>
        <taxon>Actinomycetes</taxon>
        <taxon>Micrococcales</taxon>
        <taxon>Micrococcaceae</taxon>
        <taxon>Micrococcus</taxon>
    </lineage>
</organism>
<dbReference type="EMBL" id="CP001628">
    <property type="protein sequence ID" value="ACS31213.1"/>
    <property type="molecule type" value="Genomic_DNA"/>
</dbReference>
<dbReference type="RefSeq" id="WP_010080376.1">
    <property type="nucleotide sequence ID" value="NC_012803.1"/>
</dbReference>
<dbReference type="SMR" id="C5CC72"/>
<dbReference type="STRING" id="465515.Mlut_17260"/>
<dbReference type="EnsemblBacteria" id="ACS31213">
    <property type="protein sequence ID" value="ACS31213"/>
    <property type="gene ID" value="Mlut_17260"/>
</dbReference>
<dbReference type="GeneID" id="93343592"/>
<dbReference type="KEGG" id="mlu:Mlut_17260"/>
<dbReference type="eggNOG" id="COG0222">
    <property type="taxonomic scope" value="Bacteria"/>
</dbReference>
<dbReference type="HOGENOM" id="CLU_086499_3_0_11"/>
<dbReference type="Proteomes" id="UP000000738">
    <property type="component" value="Chromosome"/>
</dbReference>
<dbReference type="GO" id="GO:0022625">
    <property type="term" value="C:cytosolic large ribosomal subunit"/>
    <property type="evidence" value="ECO:0007669"/>
    <property type="project" value="TreeGrafter"/>
</dbReference>
<dbReference type="GO" id="GO:0003729">
    <property type="term" value="F:mRNA binding"/>
    <property type="evidence" value="ECO:0007669"/>
    <property type="project" value="TreeGrafter"/>
</dbReference>
<dbReference type="GO" id="GO:0003735">
    <property type="term" value="F:structural constituent of ribosome"/>
    <property type="evidence" value="ECO:0007669"/>
    <property type="project" value="InterPro"/>
</dbReference>
<dbReference type="GO" id="GO:0006412">
    <property type="term" value="P:translation"/>
    <property type="evidence" value="ECO:0007669"/>
    <property type="project" value="UniProtKB-UniRule"/>
</dbReference>
<dbReference type="CDD" id="cd00387">
    <property type="entry name" value="Ribosomal_L7_L12"/>
    <property type="match status" value="1"/>
</dbReference>
<dbReference type="FunFam" id="1.20.5.710:FF:000005">
    <property type="entry name" value="50S ribosomal protein L7/L12"/>
    <property type="match status" value="1"/>
</dbReference>
<dbReference type="FunFam" id="3.30.1390.10:FF:000001">
    <property type="entry name" value="50S ribosomal protein L7/L12"/>
    <property type="match status" value="1"/>
</dbReference>
<dbReference type="Gene3D" id="3.30.1390.10">
    <property type="match status" value="1"/>
</dbReference>
<dbReference type="Gene3D" id="1.20.5.710">
    <property type="entry name" value="Single helix bin"/>
    <property type="match status" value="1"/>
</dbReference>
<dbReference type="HAMAP" id="MF_00368">
    <property type="entry name" value="Ribosomal_bL12"/>
    <property type="match status" value="1"/>
</dbReference>
<dbReference type="InterPro" id="IPR000206">
    <property type="entry name" value="Ribosomal_bL12"/>
</dbReference>
<dbReference type="InterPro" id="IPR013823">
    <property type="entry name" value="Ribosomal_bL12_C"/>
</dbReference>
<dbReference type="InterPro" id="IPR014719">
    <property type="entry name" value="Ribosomal_bL12_C/ClpS-like"/>
</dbReference>
<dbReference type="InterPro" id="IPR008932">
    <property type="entry name" value="Ribosomal_bL12_oligo"/>
</dbReference>
<dbReference type="InterPro" id="IPR036235">
    <property type="entry name" value="Ribosomal_bL12_oligo_N_sf"/>
</dbReference>
<dbReference type="NCBIfam" id="TIGR00855">
    <property type="entry name" value="L12"/>
    <property type="match status" value="1"/>
</dbReference>
<dbReference type="PANTHER" id="PTHR45987">
    <property type="entry name" value="39S RIBOSOMAL PROTEIN L12"/>
    <property type="match status" value="1"/>
</dbReference>
<dbReference type="PANTHER" id="PTHR45987:SF4">
    <property type="entry name" value="LARGE RIBOSOMAL SUBUNIT PROTEIN BL12M"/>
    <property type="match status" value="1"/>
</dbReference>
<dbReference type="Pfam" id="PF00542">
    <property type="entry name" value="Ribosomal_L12"/>
    <property type="match status" value="1"/>
</dbReference>
<dbReference type="Pfam" id="PF16320">
    <property type="entry name" value="Ribosomal_L12_N"/>
    <property type="match status" value="1"/>
</dbReference>
<dbReference type="SUPFAM" id="SSF54736">
    <property type="entry name" value="ClpS-like"/>
    <property type="match status" value="1"/>
</dbReference>
<dbReference type="SUPFAM" id="SSF48300">
    <property type="entry name" value="Ribosomal protein L7/12, oligomerisation (N-terminal) domain"/>
    <property type="match status" value="1"/>
</dbReference>
<gene>
    <name evidence="1" type="primary">rplL</name>
    <name type="ordered locus">Mlut_17260</name>
</gene>
<name>RL7_MICLC</name>
<keyword id="KW-1185">Reference proteome</keyword>
<keyword id="KW-0687">Ribonucleoprotein</keyword>
<keyword id="KW-0689">Ribosomal protein</keyword>
<reference key="1">
    <citation type="journal article" date="2010" name="J. Bacteriol.">
        <title>Genome sequence of the Fleming strain of Micrococcus luteus, a simple free-living actinobacterium.</title>
        <authorList>
            <person name="Young M."/>
            <person name="Artsatbanov V."/>
            <person name="Beller H.R."/>
            <person name="Chandra G."/>
            <person name="Chater K.F."/>
            <person name="Dover L.G."/>
            <person name="Goh E.B."/>
            <person name="Kahan T."/>
            <person name="Kaprelyants A.S."/>
            <person name="Kyrpides N."/>
            <person name="Lapidus A."/>
            <person name="Lowry S.R."/>
            <person name="Lykidis A."/>
            <person name="Mahillon J."/>
            <person name="Markowitz V."/>
            <person name="Mavromatis K."/>
            <person name="Mukamolova G.V."/>
            <person name="Oren A."/>
            <person name="Rokem J.S."/>
            <person name="Smith M.C."/>
            <person name="Young D.I."/>
            <person name="Greenblatt C.L."/>
        </authorList>
    </citation>
    <scope>NUCLEOTIDE SEQUENCE [LARGE SCALE GENOMIC DNA]</scope>
    <source>
        <strain>ATCC 4698 / DSM 20030 / JCM 1464 / CCM 169 / CCUG 5858 / IAM 1056 / NBRC 3333 / NCIMB 9278 / NCTC 2665 / VKM Ac-2230</strain>
    </source>
</reference>
<comment type="function">
    <text evidence="1">Forms part of the ribosomal stalk which helps the ribosome interact with GTP-bound translation factors. Is thus essential for accurate translation.</text>
</comment>
<comment type="subunit">
    <text evidence="1">Homodimer. Part of the ribosomal stalk of the 50S ribosomal subunit. Forms a multimeric L10(L12)X complex, where L10 forms an elongated spine to which 2 to 4 L12 dimers bind in a sequential fashion. Binds GTP-bound translation factors.</text>
</comment>
<comment type="similarity">
    <text evidence="1">Belongs to the bacterial ribosomal protein bL12 family.</text>
</comment>
<sequence>MAKLTTEELLAAFEELTLIELSEFIKAFEEKFDVTAAAPVAVAAAGGAAGGAEAAAAEEKDEFDVILEAAGDKKIGVIKEVRALTSLGLKEAKDLVDGAPKPILEGVNKETAEKAKEQLEGAGATVTLK</sequence>
<accession>C5CC72</accession>
<protein>
    <recommendedName>
        <fullName evidence="1">Large ribosomal subunit protein bL12</fullName>
    </recommendedName>
    <alternativeName>
        <fullName evidence="2">50S ribosomal protein L7/L12</fullName>
    </alternativeName>
</protein>
<evidence type="ECO:0000255" key="1">
    <source>
        <dbReference type="HAMAP-Rule" id="MF_00368"/>
    </source>
</evidence>
<evidence type="ECO:0000305" key="2"/>